<name>RNS4_PYRPY</name>
<keyword id="KW-0903">Direct protein sequencing</keyword>
<keyword id="KW-1015">Disulfide bond</keyword>
<keyword id="KW-0255">Endonuclease</keyword>
<keyword id="KW-0325">Glycoprotein</keyword>
<keyword id="KW-0378">Hydrolase</keyword>
<keyword id="KW-0456">Lyase</keyword>
<keyword id="KW-0540">Nuclease</keyword>
<keyword id="KW-0964">Secreted</keyword>
<keyword id="KW-0732">Signal</keyword>
<evidence type="ECO:0000250" key="1">
    <source>
        <dbReference type="UniProtKB" id="P08056"/>
    </source>
</evidence>
<evidence type="ECO:0000250" key="2">
    <source>
        <dbReference type="UniProtKB" id="P23540"/>
    </source>
</evidence>
<evidence type="ECO:0000250" key="3">
    <source>
        <dbReference type="UniProtKB" id="Q7SID5"/>
    </source>
</evidence>
<evidence type="ECO:0000255" key="4"/>
<evidence type="ECO:0000255" key="5">
    <source>
        <dbReference type="PROSITE-ProRule" id="PRU00498"/>
    </source>
</evidence>
<evidence type="ECO:0000255" key="6">
    <source>
        <dbReference type="PROSITE-ProRule" id="PRU10045"/>
    </source>
</evidence>
<evidence type="ECO:0000255" key="7">
    <source>
        <dbReference type="PROSITE-ProRule" id="PRU10046"/>
    </source>
</evidence>
<evidence type="ECO:0000269" key="8">
    <source>
    </source>
</evidence>
<evidence type="ECO:0000305" key="9"/>
<proteinExistence type="evidence at protein level"/>
<accession>Q40966</accession>
<sequence length="228" mass="25858">MGITGMTYMFTMVLSLIVLIFSASTVGFDYFQFTQQYQPAVCNSNPTPCNDPTDKLFTVHGLWPSNRNGPDPEKCKTTTMNSQKIGNMTAQLEIIWPNVLNRSDHVGFWEREWLKHGTCGYPTIKDDMHYLKTVIKMYITQKQNVSAILSKATIQPNGNNRSLVDIENAIRSGNNNTKPKFKCQKNTRTTTELVEVTLCSNRDLTKFINCPHGPPKGSRYFCPANVKY</sequence>
<comment type="function">
    <text>Self-incompatibility (SI) is the inherited ability of a flowering plant to prevent self-fertilization by discriminating between self and non-self pollen during pollination. In many species, self-incompatibility is controlled by the single, multiallelic locus S.</text>
</comment>
<comment type="catalytic activity">
    <reaction evidence="6">
        <text>a ribonucleotidyl-ribonucleotide-RNA + H2O = a 3'-end 3'-phospho-ribonucleotide-RNA + a 5'-end dephospho-ribonucleoside-RNA + H(+)</text>
        <dbReference type="Rhea" id="RHEA:68052"/>
        <dbReference type="Rhea" id="RHEA-COMP:10463"/>
        <dbReference type="Rhea" id="RHEA-COMP:13936"/>
        <dbReference type="Rhea" id="RHEA-COMP:17355"/>
        <dbReference type="ChEBI" id="CHEBI:15377"/>
        <dbReference type="ChEBI" id="CHEBI:15378"/>
        <dbReference type="ChEBI" id="CHEBI:83062"/>
        <dbReference type="ChEBI" id="CHEBI:138284"/>
        <dbReference type="ChEBI" id="CHEBI:173118"/>
        <dbReference type="EC" id="4.6.1.19"/>
    </reaction>
</comment>
<comment type="subcellular location">
    <subcellularLocation>
        <location>Secreted</location>
        <location>Extracellular space</location>
    </subcellularLocation>
</comment>
<comment type="PTM">
    <text>The N-glycans attached at Asn-101, Asn-160 and Asn-175 consist predominantly of disaccharide (GlcNAc-GlcNAc). The N-glycan at 87 is 53% monosaccharide and 47% disaccharide. The N-glycan at Asn-144 contains mannose and xylose.</text>
</comment>
<comment type="similarity">
    <text evidence="9">Belongs to the RNase T2 family.</text>
</comment>
<dbReference type="EC" id="4.6.1.19" evidence="7"/>
<dbReference type="EMBL" id="AB009385">
    <property type="protein sequence ID" value="BAA28354.1"/>
    <property type="molecule type" value="Genomic_DNA"/>
</dbReference>
<dbReference type="EMBL" id="D49528">
    <property type="protein sequence ID" value="BAA08474.1"/>
    <property type="molecule type" value="mRNA"/>
</dbReference>
<dbReference type="EMBL" id="AB014072">
    <property type="protein sequence ID" value="BAA77692.1"/>
    <property type="molecule type" value="Genomic_DNA"/>
</dbReference>
<dbReference type="PIR" id="JC4869">
    <property type="entry name" value="JC4869"/>
</dbReference>
<dbReference type="PIR" id="S39932">
    <property type="entry name" value="S39932"/>
</dbReference>
<dbReference type="SMR" id="Q40966"/>
<dbReference type="iPTMnet" id="Q40966"/>
<dbReference type="GO" id="GO:0005576">
    <property type="term" value="C:extracellular region"/>
    <property type="evidence" value="ECO:0007669"/>
    <property type="project" value="UniProtKB-SubCell"/>
</dbReference>
<dbReference type="GO" id="GO:0033897">
    <property type="term" value="F:ribonuclease T2 activity"/>
    <property type="evidence" value="ECO:0007669"/>
    <property type="project" value="UniProtKB-EC"/>
</dbReference>
<dbReference type="GO" id="GO:0003723">
    <property type="term" value="F:RNA binding"/>
    <property type="evidence" value="ECO:0007669"/>
    <property type="project" value="InterPro"/>
</dbReference>
<dbReference type="GO" id="GO:0006401">
    <property type="term" value="P:RNA catabolic process"/>
    <property type="evidence" value="ECO:0007669"/>
    <property type="project" value="TreeGrafter"/>
</dbReference>
<dbReference type="CDD" id="cd01061">
    <property type="entry name" value="RNase_T2_euk"/>
    <property type="match status" value="1"/>
</dbReference>
<dbReference type="Gene3D" id="3.90.730.10">
    <property type="entry name" value="Ribonuclease T2-like"/>
    <property type="match status" value="1"/>
</dbReference>
<dbReference type="InterPro" id="IPR033697">
    <property type="entry name" value="Ribonuclease_T2_eukaryotic"/>
</dbReference>
<dbReference type="InterPro" id="IPR001568">
    <property type="entry name" value="RNase_T2-like"/>
</dbReference>
<dbReference type="InterPro" id="IPR036430">
    <property type="entry name" value="RNase_T2-like_sf"/>
</dbReference>
<dbReference type="InterPro" id="IPR018188">
    <property type="entry name" value="RNase_T2_His_AS_1"/>
</dbReference>
<dbReference type="PANTHER" id="PTHR11240:SF18">
    <property type="entry name" value="OS07G0630400 PROTEIN"/>
    <property type="match status" value="1"/>
</dbReference>
<dbReference type="PANTHER" id="PTHR11240">
    <property type="entry name" value="RIBONUCLEASE T2"/>
    <property type="match status" value="1"/>
</dbReference>
<dbReference type="Pfam" id="PF00445">
    <property type="entry name" value="Ribonuclease_T2"/>
    <property type="match status" value="1"/>
</dbReference>
<dbReference type="SUPFAM" id="SSF55895">
    <property type="entry name" value="Ribonuclease Rh-like"/>
    <property type="match status" value="1"/>
</dbReference>
<dbReference type="PROSITE" id="PS00530">
    <property type="entry name" value="RNASE_T2_1"/>
    <property type="match status" value="1"/>
</dbReference>
<organism>
    <name type="scientific">Pyrus pyrifolia</name>
    <name type="common">Chinese pear</name>
    <name type="synonym">Pyrus serotina</name>
    <dbReference type="NCBI Taxonomy" id="3767"/>
    <lineage>
        <taxon>Eukaryota</taxon>
        <taxon>Viridiplantae</taxon>
        <taxon>Streptophyta</taxon>
        <taxon>Embryophyta</taxon>
        <taxon>Tracheophyta</taxon>
        <taxon>Spermatophyta</taxon>
        <taxon>Magnoliopsida</taxon>
        <taxon>eudicotyledons</taxon>
        <taxon>Gunneridae</taxon>
        <taxon>Pentapetalae</taxon>
        <taxon>rosids</taxon>
        <taxon>fabids</taxon>
        <taxon>Rosales</taxon>
        <taxon>Rosaceae</taxon>
        <taxon>Amygdaloideae</taxon>
        <taxon>Maleae</taxon>
        <taxon>Pyrus</taxon>
    </lineage>
</organism>
<reference key="1">
    <citation type="journal article" date="1998" name="Gene">
        <title>Characterization of the flanking regions of the S-RNase genes of Japanese pear (Pyrus serotina) and apple (Malus x domestica).</title>
        <authorList>
            <person name="Ushijima K."/>
            <person name="Sassa H."/>
            <person name="Hirano H."/>
        </authorList>
    </citation>
    <scope>NUCLEOTIDE SEQUENCE [GENOMIC DNA]</scope>
    <source>
        <strain>cv. Nijisseiki</strain>
    </source>
</reference>
<reference key="2">
    <citation type="online journal article" date="1995" name="Plant Gene Register">
        <title>Nucleotide sequences of cDNAs encoding S2- and S4-RNases from Japanese pear (Pyrus pyrifolia Nakai 1).</title>
        <authorList>
            <person name="Norioka N."/>
            <person name="Ohnishi Y."/>
            <person name="Norioka S."/>
            <person name="Ishimizu T."/>
            <person name="Nakanishi T."/>
            <person name="Sakiyama F."/>
        </authorList>
        <locator>PGR95-020</locator>
    </citation>
    <scope>NUCLEOTIDE SEQUENCE OF 6-228</scope>
    <source>
        <strain>cv. Nijisseiki</strain>
        <tissue>Style</tissue>
    </source>
</reference>
<reference key="3">
    <citation type="submission" date="1998-05" db="EMBL/GenBank/DDBJ databases">
        <title>The genomic structures of S-RNases in Japanese pear.</title>
        <authorList>
            <person name="Norioka N."/>
            <person name="Norioka S."/>
        </authorList>
    </citation>
    <scope>NUCLEOTIDE SEQUENCE</scope>
    <source>
        <strain>cv. Nijisseiki</strain>
    </source>
</reference>
<reference key="4">
    <citation type="journal article" date="1996" name="J. Biochem.">
        <title>Molecular cloning and nucleotide sequences of cDNAs encoding S-allele specific stylar RNases in a self-incompatible cultivar and its self-compatible mutant of Japanese pear, Pyrus pyrifolia Nakai.</title>
        <authorList>
            <person name="Norioka N."/>
            <person name="Norioka S."/>
            <person name="Ohnishi Y."/>
            <person name="Ishimizu T."/>
            <person name="Oneyama C."/>
            <person name="Nakanishi T."/>
            <person name="Sakiyama F."/>
        </authorList>
    </citation>
    <scope>NUCLEOTIDE SEQUENCE [MRNA]</scope>
    <scope>PARTIAL PROTEIN SEQUENCE</scope>
    <source>
        <strain>cv. Nijisseiki</strain>
    </source>
</reference>
<reference key="5">
    <citation type="journal article" date="1999" name="Eur. J. Biochem.">
        <title>Presence of asparagine-linked N-acetylglucosamine and chitobiose in Pyrus pyrifolia S-RNases associated with gametophytic self-incompatibility.</title>
        <authorList>
            <person name="Ishimizu T."/>
            <person name="Mitsukami Y."/>
            <person name="Shinkawa T."/>
            <person name="Natsuka S."/>
            <person name="Hase S."/>
            <person name="Miyagi M."/>
            <person name="Sakiyama F."/>
            <person name="Norioka S."/>
        </authorList>
    </citation>
    <scope>GLYCOSYLATION AT ASN-87; ASN-101; ASN-144; ASN-160 AND ASN-175</scope>
    <scope>STRUCTURE OF CARBOHYDRATES</scope>
    <source>
        <strain>cv. Nijisseiki</strain>
        <tissue>Style</tissue>
    </source>
</reference>
<protein>
    <recommendedName>
        <fullName>Ribonuclease S-4</fullName>
        <ecNumber evidence="7">4.6.1.19</ecNumber>
    </recommendedName>
    <alternativeName>
        <fullName>S4-RNase</fullName>
    </alternativeName>
</protein>
<feature type="signal peptide" evidence="4">
    <location>
        <begin position="1"/>
        <end position="27"/>
    </location>
</feature>
<feature type="chain" id="PRO_0000030980" description="Ribonuclease S-4">
    <location>
        <begin position="28"/>
        <end position="228"/>
    </location>
</feature>
<feature type="active site" description="Proton donor" evidence="3 6">
    <location>
        <position position="60"/>
    </location>
</feature>
<feature type="active site" evidence="6">
    <location>
        <position position="112"/>
    </location>
</feature>
<feature type="active site" description="Proton acceptor" evidence="3 6">
    <location>
        <position position="116"/>
    </location>
</feature>
<feature type="binding site" evidence="2">
    <location>
        <position position="36"/>
    </location>
    <ligand>
        <name>RNA</name>
        <dbReference type="ChEBI" id="CHEBI:33697"/>
    </ligand>
    <ligandPart>
        <name>a 3'-terminal ribonucleotide 3'-phosphate residue</name>
        <dbReference type="ChEBI" id="CHEBI:83062"/>
    </ligandPart>
</feature>
<feature type="binding site" evidence="2">
    <location>
        <position position="60"/>
    </location>
    <ligand>
        <name>RNA</name>
        <dbReference type="ChEBI" id="CHEBI:33697"/>
    </ligand>
    <ligandPart>
        <name>a 3'-terminal ribonucleotide 3'-phosphate residue</name>
        <dbReference type="ChEBI" id="CHEBI:83062"/>
    </ligandPart>
</feature>
<feature type="binding site" evidence="2">
    <location>
        <begin position="98"/>
        <end position="99"/>
    </location>
    <ligand>
        <name>RNA</name>
        <dbReference type="ChEBI" id="CHEBI:33697"/>
    </ligand>
    <ligandPart>
        <name>a 3'-terminal ribonucleotide 3'-phosphate residue</name>
        <dbReference type="ChEBI" id="CHEBI:83062"/>
    </ligandPart>
</feature>
<feature type="binding site" evidence="2">
    <location>
        <position position="108"/>
    </location>
    <ligand>
        <name>RNA</name>
        <dbReference type="ChEBI" id="CHEBI:33697"/>
    </ligand>
    <ligandPart>
        <name>a 3'-terminal ribonucleotide 3'-phosphate residue</name>
        <dbReference type="ChEBI" id="CHEBI:83062"/>
    </ligandPart>
</feature>
<feature type="binding site" evidence="2">
    <location>
        <begin position="111"/>
        <end position="112"/>
    </location>
    <ligand>
        <name>RNA</name>
        <dbReference type="ChEBI" id="CHEBI:33697"/>
    </ligand>
    <ligandPart>
        <name>a 3'-terminal ribonucleotide 3'-phosphate residue</name>
        <dbReference type="ChEBI" id="CHEBI:83062"/>
    </ligandPart>
</feature>
<feature type="binding site" evidence="2">
    <location>
        <begin position="115"/>
        <end position="116"/>
    </location>
    <ligand>
        <name>RNA</name>
        <dbReference type="ChEBI" id="CHEBI:33697"/>
    </ligand>
    <ligandPart>
        <name>a 3'-terminal ribonucleotide 3'-phosphate residue</name>
        <dbReference type="ChEBI" id="CHEBI:83062"/>
    </ligandPart>
</feature>
<feature type="glycosylation site" description="N-linked (GlcNAc) asparagine" evidence="5 8">
    <location>
        <position position="87"/>
    </location>
</feature>
<feature type="glycosylation site" description="N-linked (GlcNAc...) asparagine" evidence="5 8">
    <location>
        <position position="101"/>
    </location>
</feature>
<feature type="glycosylation site" description="N-linked (GlcNAc...) asparagine" evidence="5 8">
    <location>
        <position position="144"/>
    </location>
</feature>
<feature type="glycosylation site" description="N-linked (GlcNAc...) asparagine" evidence="5 8">
    <location>
        <position position="160"/>
    </location>
</feature>
<feature type="glycosylation site" description="N-linked (GlcNAc...) asparagine" evidence="5 8">
    <location>
        <position position="175"/>
    </location>
</feature>
<feature type="disulfide bond" evidence="3">
    <location>
        <begin position="42"/>
        <end position="49"/>
    </location>
</feature>
<feature type="disulfide bond" evidence="1">
    <location>
        <begin position="75"/>
        <end position="119"/>
    </location>
</feature>
<feature type="disulfide bond" evidence="1">
    <location>
        <begin position="183"/>
        <end position="222"/>
    </location>
</feature>
<feature type="disulfide bond" evidence="2">
    <location>
        <begin position="199"/>
        <end position="210"/>
    </location>
</feature>